<accession>Q61190</accession>
<keyword id="KW-0002">3D-structure</keyword>
<keyword id="KW-0051">Antiviral defense</keyword>
<keyword id="KW-1015">Disulfide bond</keyword>
<keyword id="KW-0325">Glycoprotein</keyword>
<keyword id="KW-0472">Membrane</keyword>
<keyword id="KW-0597">Phosphoprotein</keyword>
<keyword id="KW-0675">Receptor</keyword>
<keyword id="KW-1185">Reference proteome</keyword>
<keyword id="KW-0677">Repeat</keyword>
<keyword id="KW-0732">Signal</keyword>
<keyword id="KW-0812">Transmembrane</keyword>
<keyword id="KW-1133">Transmembrane helix</keyword>
<feature type="signal peptide" evidence="2">
    <location>
        <begin position="1"/>
        <end position="19"/>
    </location>
</feature>
<feature type="chain" id="PRO_0000011015" description="Interleukin-10 receptor subunit beta">
    <location>
        <begin position="20"/>
        <end position="349"/>
    </location>
</feature>
<feature type="topological domain" description="Extracellular" evidence="2">
    <location>
        <begin position="20"/>
        <end position="220"/>
    </location>
</feature>
<feature type="transmembrane region" description="Helical" evidence="2">
    <location>
        <begin position="221"/>
        <end position="241"/>
    </location>
</feature>
<feature type="topological domain" description="Cytoplasmic" evidence="2">
    <location>
        <begin position="242"/>
        <end position="349"/>
    </location>
</feature>
<feature type="domain" description="Fibronectin type-III 1" evidence="3">
    <location>
        <begin position="23"/>
        <end position="111"/>
    </location>
</feature>
<feature type="domain" description="Fibronectin type-III 2" evidence="3">
    <location>
        <begin position="112"/>
        <end position="215"/>
    </location>
</feature>
<feature type="region of interest" description="Disordered" evidence="4">
    <location>
        <begin position="300"/>
        <end position="349"/>
    </location>
</feature>
<feature type="compositionally biased region" description="Basic and acidic residues" evidence="4">
    <location>
        <begin position="322"/>
        <end position="341"/>
    </location>
</feature>
<feature type="modified residue" description="Phosphoserine" evidence="6">
    <location>
        <position position="299"/>
    </location>
</feature>
<feature type="glycosylation site" description="N-linked (GlcNAc...) asparagine" evidence="2">
    <location>
        <position position="49"/>
    </location>
</feature>
<feature type="glycosylation site" description="N-linked (GlcNAc...) asparagine" evidence="2">
    <location>
        <position position="102"/>
    </location>
</feature>
<feature type="glycosylation site" description="N-linked (GlcNAc...) asparagine" evidence="2">
    <location>
        <position position="161"/>
    </location>
</feature>
<feature type="glycosylation site" description="N-linked (GlcNAc...) asparagine" evidence="2">
    <location>
        <position position="199"/>
    </location>
</feature>
<feature type="disulfide bond" evidence="1">
    <location>
        <begin position="66"/>
        <end position="74"/>
    </location>
</feature>
<feature type="disulfide bond" evidence="1">
    <location>
        <begin position="188"/>
        <end position="209"/>
    </location>
</feature>
<feature type="strand" evidence="7">
    <location>
        <begin position="25"/>
        <end position="32"/>
    </location>
</feature>
<feature type="strand" evidence="7">
    <location>
        <begin position="35"/>
        <end position="41"/>
    </location>
</feature>
<feature type="strand" evidence="7">
    <location>
        <begin position="51"/>
        <end position="58"/>
    </location>
</feature>
<feature type="strand" evidence="7">
    <location>
        <begin position="61"/>
        <end position="75"/>
    </location>
</feature>
<feature type="strand" evidence="7">
    <location>
        <begin position="85"/>
        <end position="93"/>
    </location>
</feature>
<feature type="strand" evidence="7">
    <location>
        <begin position="101"/>
        <end position="105"/>
    </location>
</feature>
<feature type="helix" evidence="7">
    <location>
        <begin position="107"/>
        <end position="110"/>
    </location>
</feature>
<feature type="strand" evidence="7">
    <location>
        <begin position="117"/>
        <end position="121"/>
    </location>
</feature>
<feature type="strand" evidence="7">
    <location>
        <begin position="124"/>
        <end position="132"/>
    </location>
</feature>
<feature type="strand" evidence="7">
    <location>
        <begin position="137"/>
        <end position="141"/>
    </location>
</feature>
<feature type="helix" evidence="7">
    <location>
        <begin position="145"/>
        <end position="147"/>
    </location>
</feature>
<feature type="strand" evidence="7">
    <location>
        <begin position="152"/>
        <end position="159"/>
    </location>
</feature>
<feature type="strand" evidence="7">
    <location>
        <begin position="167"/>
        <end position="180"/>
    </location>
</feature>
<feature type="strand" evidence="7">
    <location>
        <begin position="187"/>
        <end position="195"/>
    </location>
</feature>
<feature type="strand" evidence="7">
    <location>
        <begin position="201"/>
        <end position="204"/>
    </location>
</feature>
<feature type="strand" evidence="7">
    <location>
        <begin position="208"/>
        <end position="210"/>
    </location>
</feature>
<evidence type="ECO:0000250" key="1"/>
<evidence type="ECO:0000255" key="2"/>
<evidence type="ECO:0000255" key="3">
    <source>
        <dbReference type="PROSITE-ProRule" id="PRU00316"/>
    </source>
</evidence>
<evidence type="ECO:0000256" key="4">
    <source>
        <dbReference type="SAM" id="MobiDB-lite"/>
    </source>
</evidence>
<evidence type="ECO:0000305" key="5"/>
<evidence type="ECO:0007744" key="6">
    <source>
    </source>
</evidence>
<evidence type="ECO:0007829" key="7">
    <source>
        <dbReference type="PDB" id="6WEO"/>
    </source>
</evidence>
<sequence>MAPCVAGWLGGFLLVPALGMIPPPEKVRMNSVNFKNILQWEVPAFPKTNLTFTAQYESYRSFQDHCKRTASTQCDFSHLSKYGDYTVRVRAELADEHSEWVNVTFCPVEDTIIGPPEMQIESLAESLHLRFSAPQIENEPETWTLKNIYDSWAYRVQYWKNGTNEKFQVVSPYDSEVLRNLEPWTTYCIQVQGFLLDQNRTGEWSEPICERTGNDEITPSWIVAIILIVSVLVVFLFLLGCFVVLWLIYKKTKHTFRSGTSLPQHLKEFLGHPHHSTFLLFSFPPPEEAEVFDKLSIISEESEGSKQSPEDNCASEPPSDPGPRELESKDEAPSPPHDDPKLLTSTSEV</sequence>
<dbReference type="EMBL" id="U53696">
    <property type="protein sequence ID" value="AAC53062.1"/>
    <property type="molecule type" value="mRNA"/>
</dbReference>
<dbReference type="PDB" id="6WEO">
    <property type="method" value="X-ray"/>
    <property type="resolution" value="2.60 A"/>
    <property type="chains" value="0/3/6/9/C/E/H/K/O/R/U/X=20-220"/>
</dbReference>
<dbReference type="PDBsum" id="6WEO"/>
<dbReference type="SMR" id="Q61190"/>
<dbReference type="FunCoup" id="Q61190">
    <property type="interactions" value="88"/>
</dbReference>
<dbReference type="STRING" id="10090.ENSMUSP00000023691"/>
<dbReference type="GlyCosmos" id="Q61190">
    <property type="glycosylation" value="4 sites, No reported glycans"/>
</dbReference>
<dbReference type="GlyGen" id="Q61190">
    <property type="glycosylation" value="4 sites"/>
</dbReference>
<dbReference type="iPTMnet" id="Q61190"/>
<dbReference type="PhosphoSitePlus" id="Q61190"/>
<dbReference type="PaxDb" id="10090-ENSMUSP00000023691"/>
<dbReference type="ProteomicsDB" id="273243"/>
<dbReference type="AGR" id="MGI:109380"/>
<dbReference type="MGI" id="MGI:109380">
    <property type="gene designation" value="Il10rb"/>
</dbReference>
<dbReference type="eggNOG" id="ENOG502S2QA">
    <property type="taxonomic scope" value="Eukaryota"/>
</dbReference>
<dbReference type="InParanoid" id="Q61190"/>
<dbReference type="Reactome" id="R-MMU-6783783">
    <property type="pathway name" value="Interleukin-10 signaling"/>
</dbReference>
<dbReference type="Reactome" id="R-MMU-8854691">
    <property type="pathway name" value="Interleukin-20 family signaling"/>
</dbReference>
<dbReference type="ChiTaRS" id="Il10rb">
    <property type="organism name" value="mouse"/>
</dbReference>
<dbReference type="PRO" id="PR:Q61190"/>
<dbReference type="Proteomes" id="UP000000589">
    <property type="component" value="Unplaced"/>
</dbReference>
<dbReference type="RNAct" id="Q61190">
    <property type="molecule type" value="protein"/>
</dbReference>
<dbReference type="GO" id="GO:0016020">
    <property type="term" value="C:membrane"/>
    <property type="evidence" value="ECO:0007669"/>
    <property type="project" value="UniProtKB-SubCell"/>
</dbReference>
<dbReference type="GO" id="GO:0004920">
    <property type="term" value="F:interleukin-10 receptor activity"/>
    <property type="evidence" value="ECO:0000315"/>
    <property type="project" value="MGI"/>
</dbReference>
<dbReference type="GO" id="GO:0051607">
    <property type="term" value="P:defense response to virus"/>
    <property type="evidence" value="ECO:0007669"/>
    <property type="project" value="UniProtKB-KW"/>
</dbReference>
<dbReference type="CDD" id="cd00063">
    <property type="entry name" value="FN3"/>
    <property type="match status" value="2"/>
</dbReference>
<dbReference type="FunFam" id="2.60.40.10:FF:001312">
    <property type="entry name" value="Interleukin 10 receptor subunit beta"/>
    <property type="match status" value="1"/>
</dbReference>
<dbReference type="FunFam" id="2.60.40.10:FF:001363">
    <property type="entry name" value="Interleukin 10 receptor subunit beta"/>
    <property type="match status" value="1"/>
</dbReference>
<dbReference type="Gene3D" id="2.60.40.10">
    <property type="entry name" value="Immunoglobulins"/>
    <property type="match status" value="2"/>
</dbReference>
<dbReference type="InterPro" id="IPR003961">
    <property type="entry name" value="FN3_dom"/>
</dbReference>
<dbReference type="InterPro" id="IPR036116">
    <property type="entry name" value="FN3_sf"/>
</dbReference>
<dbReference type="InterPro" id="IPR013783">
    <property type="entry name" value="Ig-like_fold"/>
</dbReference>
<dbReference type="InterPro" id="IPR015373">
    <property type="entry name" value="Interferon/interleukin_rcp_dom"/>
</dbReference>
<dbReference type="InterPro" id="IPR050650">
    <property type="entry name" value="Type-II_Cytokine-TF_Rcpt"/>
</dbReference>
<dbReference type="PANTHER" id="PTHR20859">
    <property type="entry name" value="INTERFERON/INTERLEUKIN RECEPTOR"/>
    <property type="match status" value="1"/>
</dbReference>
<dbReference type="PANTHER" id="PTHR20859:SF50">
    <property type="entry name" value="INTERLEUKIN-10 RECEPTOR SUBUNIT BETA"/>
    <property type="match status" value="1"/>
</dbReference>
<dbReference type="Pfam" id="PF09294">
    <property type="entry name" value="Interfer-bind"/>
    <property type="match status" value="1"/>
</dbReference>
<dbReference type="Pfam" id="PF01108">
    <property type="entry name" value="Tissue_fac"/>
    <property type="match status" value="1"/>
</dbReference>
<dbReference type="SMART" id="SM00060">
    <property type="entry name" value="FN3"/>
    <property type="match status" value="2"/>
</dbReference>
<dbReference type="SUPFAM" id="SSF49265">
    <property type="entry name" value="Fibronectin type III"/>
    <property type="match status" value="2"/>
</dbReference>
<dbReference type="PROSITE" id="PS50853">
    <property type="entry name" value="FN3"/>
    <property type="match status" value="2"/>
</dbReference>
<gene>
    <name type="primary">Il10rb</name>
    <name type="synonym">Crfb4</name>
</gene>
<reference key="1">
    <citation type="journal article" date="1997" name="Gene">
        <title>CRF2-4: isolation of cDNA clones encoding the human and mouse proteins.</title>
        <authorList>
            <person name="Gibbs V.C."/>
            <person name="Pennica D."/>
        </authorList>
    </citation>
    <scope>NUCLEOTIDE SEQUENCE [MRNA]</scope>
</reference>
<reference key="2">
    <citation type="journal article" date="1998" name="J. Exp. Med.">
        <title>The orphan receptor CRF2-4 is an essential subunit of the interleukin 10 receptor.</title>
        <authorList>
            <person name="Spencer S.D."/>
            <person name="Di Marco F."/>
            <person name="Hooley J."/>
            <person name="Pitts-Meek S."/>
            <person name="Bauer M."/>
            <person name="Ryan A.M."/>
            <person name="Sordat B."/>
            <person name="Gibbs V.C."/>
            <person name="Aguet M."/>
        </authorList>
    </citation>
    <scope>CHARACTERIZATION</scope>
</reference>
<reference key="3">
    <citation type="journal article" date="2009" name="Immunity">
        <title>The phagosomal proteome in interferon-gamma-activated macrophages.</title>
        <authorList>
            <person name="Trost M."/>
            <person name="English L."/>
            <person name="Lemieux S."/>
            <person name="Courcelles M."/>
            <person name="Desjardins M."/>
            <person name="Thibault P."/>
        </authorList>
    </citation>
    <scope>PHOSPHORYLATION [LARGE SCALE ANALYSIS] AT SER-299</scope>
    <scope>IDENTIFICATION BY MASS SPECTROMETRY [LARGE SCALE ANALYSIS]</scope>
</reference>
<organism>
    <name type="scientific">Mus musculus</name>
    <name type="common">Mouse</name>
    <dbReference type="NCBI Taxonomy" id="10090"/>
    <lineage>
        <taxon>Eukaryota</taxon>
        <taxon>Metazoa</taxon>
        <taxon>Chordata</taxon>
        <taxon>Craniata</taxon>
        <taxon>Vertebrata</taxon>
        <taxon>Euteleostomi</taxon>
        <taxon>Mammalia</taxon>
        <taxon>Eutheria</taxon>
        <taxon>Euarchontoglires</taxon>
        <taxon>Glires</taxon>
        <taxon>Rodentia</taxon>
        <taxon>Myomorpha</taxon>
        <taxon>Muroidea</taxon>
        <taxon>Muridae</taxon>
        <taxon>Murinae</taxon>
        <taxon>Mus</taxon>
        <taxon>Mus</taxon>
    </lineage>
</organism>
<protein>
    <recommendedName>
        <fullName>Interleukin-10 receptor subunit beta</fullName>
        <shortName>IL-10 receptor subunit beta</shortName>
        <shortName>IL-10R subunit beta</shortName>
        <shortName>IL-10RB</shortName>
    </recommendedName>
    <alternativeName>
        <fullName>Cytokine receptor class-II member 4</fullName>
    </alternativeName>
    <alternativeName>
        <fullName>Cytokine receptor family 2 member 4</fullName>
        <shortName>CRF2-4</shortName>
    </alternativeName>
    <alternativeName>
        <fullName>Interleukin-10 receptor subunit 2</fullName>
        <shortName>IL-10R subunit 2</shortName>
        <shortName>IL-10R2</shortName>
    </alternativeName>
    <cdAntigenName>CDw210b</cdAntigenName>
</protein>
<comment type="function">
    <text evidence="1">Shared cell surface receptor required for the activation of five class 2 cytokines: IL10, IL22, IL26, IL28, and IFNL1. The IFNLR1/IL10RB dimer is a receptor for the cytokine ligands IFNL2 and IFNL3 and mediates their antiviral activity. The ligand/receptor complex stimulate the activation of the JAK/STAT signaling pathway leading to the expression of IFN-stimulated genes (ISG), which contribute to the antiviral state (By similarity).</text>
</comment>
<comment type="subunit">
    <text evidence="1">Heterodimer with IFNLR1.</text>
</comment>
<comment type="subcellular location">
    <subcellularLocation>
        <location>Membrane</location>
        <topology>Single-pass type I membrane protein</topology>
    </subcellularLocation>
</comment>
<comment type="similarity">
    <text evidence="5">Belongs to the type II cytokine receptor family.</text>
</comment>
<proteinExistence type="evidence at protein level"/>
<name>I10R2_MOUSE</name>